<comment type="catalytic activity">
    <reaction evidence="1">
        <text>tRNA(Leu) + L-leucine + ATP = L-leucyl-tRNA(Leu) + AMP + diphosphate</text>
        <dbReference type="Rhea" id="RHEA:11688"/>
        <dbReference type="Rhea" id="RHEA-COMP:9613"/>
        <dbReference type="Rhea" id="RHEA-COMP:9622"/>
        <dbReference type="ChEBI" id="CHEBI:30616"/>
        <dbReference type="ChEBI" id="CHEBI:33019"/>
        <dbReference type="ChEBI" id="CHEBI:57427"/>
        <dbReference type="ChEBI" id="CHEBI:78442"/>
        <dbReference type="ChEBI" id="CHEBI:78494"/>
        <dbReference type="ChEBI" id="CHEBI:456215"/>
        <dbReference type="EC" id="6.1.1.4"/>
    </reaction>
</comment>
<comment type="subcellular location">
    <subcellularLocation>
        <location evidence="1">Cytoplasm</location>
    </subcellularLocation>
</comment>
<comment type="similarity">
    <text evidence="1">Belongs to the class-I aminoacyl-tRNA synthetase family.</text>
</comment>
<sequence length="806" mass="93299">MYNHNKIEKKWQKYWLDNKTFKFVDNPNNPKKFYVLDMFPYPSGKGLHVGHPKGYTATDVISRFKRLNGYDVLHPIGWDAFGLPAEQYALETNNHPHTFTQQNIKIFRKQLQMIGFDFDYDKEVDTTDPQFYQWTQWIFVQLYKHNLAEIQDIDVNWCENLGTVLSNEEVVLNDKNERVSERGGHPVVRKPMKQWVLKIVDYADKLLDGLNEVEFSESLKSLQRNWIGKSIGTSVQFKIKDSLLTLDVFTTRIDTIYGVQYLVVAPEHPILKSITSEQQINVVQSYIEQTKKISDLDRIADTNKTGVFSGAYAINPINQEIIPIWVSDYVLMNFATGAVMGVPAHDERDYAFAKKYALPIKSVIDTKQKLPYAGDGLHINSAMINGLNIKQSQNVLNDYLIKNHLGKKVANYKLRNWIFSRQRYWGEPFPVLFDENNQIKIIEDLPVLLPNLNEFKPSKTGESPLANAQEWLYVEIDGKKYRRETNTMPQWAGSSWYFLAYILKNEDGSYTPLNSEEAKKRFAKWLPVDVYIGGQEHAVLHLLYSRFWHRFLYDIGVVPTKEPFYKVINQGMILGENNEKMSKSKGNVINPDDIIASHGADTLRIYEMFMGPLTASLPWNPDGLDAMRKWLDRVYRLYHNLSELEVVEDLNKLNEEIIIAYHTLIKNYTKAINEQAFNIAISEMMVFVNVLYKNKVINYELLDNFLILLSCYAPHLAEELYSLNHSESVCLQKMPIYDEQKIIAQNITIPIQINGKLKHTINVLRDTNAEELVNLALACEQVKQEIGDQPIKKQIVVVNKIINFVI</sequence>
<accession>Q9PQC0</accession>
<evidence type="ECO:0000255" key="1">
    <source>
        <dbReference type="HAMAP-Rule" id="MF_00049"/>
    </source>
</evidence>
<proteinExistence type="inferred from homology"/>
<feature type="chain" id="PRO_0000152112" description="Leucine--tRNA ligase">
    <location>
        <begin position="1"/>
        <end position="806"/>
    </location>
</feature>
<feature type="short sequence motif" description="'HIGH' region">
    <location>
        <begin position="40"/>
        <end position="51"/>
    </location>
</feature>
<feature type="short sequence motif" description="'KMSKS' region">
    <location>
        <begin position="580"/>
        <end position="584"/>
    </location>
</feature>
<feature type="binding site" evidence="1">
    <location>
        <position position="583"/>
    </location>
    <ligand>
        <name>ATP</name>
        <dbReference type="ChEBI" id="CHEBI:30616"/>
    </ligand>
</feature>
<name>SYL_UREPA</name>
<dbReference type="EC" id="6.1.1.4" evidence="1"/>
<dbReference type="EMBL" id="AF222894">
    <property type="protein sequence ID" value="AAF30780.1"/>
    <property type="molecule type" value="Genomic_DNA"/>
</dbReference>
<dbReference type="RefSeq" id="WP_010891746.1">
    <property type="nucleotide sequence ID" value="NC_002162.1"/>
</dbReference>
<dbReference type="SMR" id="Q9PQC0"/>
<dbReference type="STRING" id="273119.UU371"/>
<dbReference type="EnsemblBacteria" id="AAF30780">
    <property type="protein sequence ID" value="AAF30780"/>
    <property type="gene ID" value="UU371"/>
</dbReference>
<dbReference type="GeneID" id="29672253"/>
<dbReference type="KEGG" id="uur:UU371"/>
<dbReference type="PATRIC" id="fig|273119.6.peg.385"/>
<dbReference type="eggNOG" id="COG0495">
    <property type="taxonomic scope" value="Bacteria"/>
</dbReference>
<dbReference type="HOGENOM" id="CLU_004427_0_0_14"/>
<dbReference type="OrthoDB" id="9810365at2"/>
<dbReference type="Proteomes" id="UP000000423">
    <property type="component" value="Chromosome"/>
</dbReference>
<dbReference type="GO" id="GO:0005829">
    <property type="term" value="C:cytosol"/>
    <property type="evidence" value="ECO:0007669"/>
    <property type="project" value="TreeGrafter"/>
</dbReference>
<dbReference type="GO" id="GO:0002161">
    <property type="term" value="F:aminoacyl-tRNA deacylase activity"/>
    <property type="evidence" value="ECO:0007669"/>
    <property type="project" value="InterPro"/>
</dbReference>
<dbReference type="GO" id="GO:0005524">
    <property type="term" value="F:ATP binding"/>
    <property type="evidence" value="ECO:0007669"/>
    <property type="project" value="UniProtKB-UniRule"/>
</dbReference>
<dbReference type="GO" id="GO:0004823">
    <property type="term" value="F:leucine-tRNA ligase activity"/>
    <property type="evidence" value="ECO:0007669"/>
    <property type="project" value="UniProtKB-UniRule"/>
</dbReference>
<dbReference type="GO" id="GO:0006429">
    <property type="term" value="P:leucyl-tRNA aminoacylation"/>
    <property type="evidence" value="ECO:0007669"/>
    <property type="project" value="UniProtKB-UniRule"/>
</dbReference>
<dbReference type="CDD" id="cd07958">
    <property type="entry name" value="Anticodon_Ia_Leu_BEm"/>
    <property type="match status" value="1"/>
</dbReference>
<dbReference type="CDD" id="cd00812">
    <property type="entry name" value="LeuRS_core"/>
    <property type="match status" value="1"/>
</dbReference>
<dbReference type="FunFam" id="1.10.730.10:FF:000002">
    <property type="entry name" value="Leucine--tRNA ligase"/>
    <property type="match status" value="1"/>
</dbReference>
<dbReference type="FunFam" id="3.40.50.620:FF:000056">
    <property type="entry name" value="Leucine--tRNA ligase"/>
    <property type="match status" value="1"/>
</dbReference>
<dbReference type="FunFam" id="3.40.50.620:FF:000077">
    <property type="entry name" value="Leucine--tRNA ligase"/>
    <property type="match status" value="1"/>
</dbReference>
<dbReference type="Gene3D" id="3.10.20.590">
    <property type="match status" value="1"/>
</dbReference>
<dbReference type="Gene3D" id="3.40.50.620">
    <property type="entry name" value="HUPs"/>
    <property type="match status" value="2"/>
</dbReference>
<dbReference type="Gene3D" id="1.10.730.10">
    <property type="entry name" value="Isoleucyl-tRNA Synthetase, Domain 1"/>
    <property type="match status" value="1"/>
</dbReference>
<dbReference type="HAMAP" id="MF_00049_B">
    <property type="entry name" value="Leu_tRNA_synth_B"/>
    <property type="match status" value="1"/>
</dbReference>
<dbReference type="InterPro" id="IPR001412">
    <property type="entry name" value="aa-tRNA-synth_I_CS"/>
</dbReference>
<dbReference type="InterPro" id="IPR002302">
    <property type="entry name" value="Leu-tRNA-ligase"/>
</dbReference>
<dbReference type="InterPro" id="IPR025709">
    <property type="entry name" value="Leu_tRNA-synth_edit"/>
</dbReference>
<dbReference type="InterPro" id="IPR013155">
    <property type="entry name" value="M/V/L/I-tRNA-synth_anticd-bd"/>
</dbReference>
<dbReference type="InterPro" id="IPR015413">
    <property type="entry name" value="Methionyl/Leucyl_tRNA_Synth"/>
</dbReference>
<dbReference type="InterPro" id="IPR014729">
    <property type="entry name" value="Rossmann-like_a/b/a_fold"/>
</dbReference>
<dbReference type="InterPro" id="IPR009080">
    <property type="entry name" value="tRNAsynth_Ia_anticodon-bd"/>
</dbReference>
<dbReference type="InterPro" id="IPR009008">
    <property type="entry name" value="Val/Leu/Ile-tRNA-synth_edit"/>
</dbReference>
<dbReference type="NCBIfam" id="TIGR00396">
    <property type="entry name" value="leuS_bact"/>
    <property type="match status" value="1"/>
</dbReference>
<dbReference type="PANTHER" id="PTHR43740:SF2">
    <property type="entry name" value="LEUCINE--TRNA LIGASE, MITOCHONDRIAL"/>
    <property type="match status" value="1"/>
</dbReference>
<dbReference type="PANTHER" id="PTHR43740">
    <property type="entry name" value="LEUCYL-TRNA SYNTHETASE"/>
    <property type="match status" value="1"/>
</dbReference>
<dbReference type="Pfam" id="PF08264">
    <property type="entry name" value="Anticodon_1"/>
    <property type="match status" value="1"/>
</dbReference>
<dbReference type="Pfam" id="PF13603">
    <property type="entry name" value="tRNA-synt_1_2"/>
    <property type="match status" value="1"/>
</dbReference>
<dbReference type="Pfam" id="PF09334">
    <property type="entry name" value="tRNA-synt_1g"/>
    <property type="match status" value="2"/>
</dbReference>
<dbReference type="PRINTS" id="PR00985">
    <property type="entry name" value="TRNASYNTHLEU"/>
</dbReference>
<dbReference type="SUPFAM" id="SSF47323">
    <property type="entry name" value="Anticodon-binding domain of a subclass of class I aminoacyl-tRNA synthetases"/>
    <property type="match status" value="1"/>
</dbReference>
<dbReference type="SUPFAM" id="SSF52374">
    <property type="entry name" value="Nucleotidylyl transferase"/>
    <property type="match status" value="1"/>
</dbReference>
<dbReference type="SUPFAM" id="SSF50677">
    <property type="entry name" value="ValRS/IleRS/LeuRS editing domain"/>
    <property type="match status" value="1"/>
</dbReference>
<dbReference type="PROSITE" id="PS00178">
    <property type="entry name" value="AA_TRNA_LIGASE_I"/>
    <property type="match status" value="1"/>
</dbReference>
<keyword id="KW-0030">Aminoacyl-tRNA synthetase</keyword>
<keyword id="KW-0067">ATP-binding</keyword>
<keyword id="KW-0963">Cytoplasm</keyword>
<keyword id="KW-0436">Ligase</keyword>
<keyword id="KW-0547">Nucleotide-binding</keyword>
<keyword id="KW-0648">Protein biosynthesis</keyword>
<keyword id="KW-1185">Reference proteome</keyword>
<reference key="1">
    <citation type="journal article" date="2000" name="Nature">
        <title>The complete sequence of the mucosal pathogen Ureaplasma urealyticum.</title>
        <authorList>
            <person name="Glass J.I."/>
            <person name="Lefkowitz E.J."/>
            <person name="Glass J.S."/>
            <person name="Heiner C.R."/>
            <person name="Chen E.Y."/>
            <person name="Cassell G.H."/>
        </authorList>
    </citation>
    <scope>NUCLEOTIDE SEQUENCE [LARGE SCALE GENOMIC DNA]</scope>
    <source>
        <strain>ATCC 700970</strain>
    </source>
</reference>
<organism>
    <name type="scientific">Ureaplasma parvum serovar 3 (strain ATCC 700970)</name>
    <dbReference type="NCBI Taxonomy" id="273119"/>
    <lineage>
        <taxon>Bacteria</taxon>
        <taxon>Bacillati</taxon>
        <taxon>Mycoplasmatota</taxon>
        <taxon>Mycoplasmoidales</taxon>
        <taxon>Mycoplasmoidaceae</taxon>
        <taxon>Ureaplasma</taxon>
    </lineage>
</organism>
<protein>
    <recommendedName>
        <fullName evidence="1">Leucine--tRNA ligase</fullName>
        <ecNumber evidence="1">6.1.1.4</ecNumber>
    </recommendedName>
    <alternativeName>
        <fullName evidence="1">Leucyl-tRNA synthetase</fullName>
        <shortName evidence="1">LeuRS</shortName>
    </alternativeName>
</protein>
<gene>
    <name evidence="1" type="primary">leuS</name>
    <name type="ordered locus">UU371</name>
</gene>